<protein>
    <recommendedName>
        <fullName evidence="1">Small ribosomal subunit protein bS20</fullName>
    </recommendedName>
    <alternativeName>
        <fullName evidence="2">30S ribosomal protein S20</fullName>
    </alternativeName>
</protein>
<comment type="function">
    <text evidence="1">Binds directly to 16S ribosomal RNA.</text>
</comment>
<comment type="similarity">
    <text evidence="1">Belongs to the bacterial ribosomal protein bS20 family.</text>
</comment>
<accession>Q48TC9</accession>
<evidence type="ECO:0000255" key="1">
    <source>
        <dbReference type="HAMAP-Rule" id="MF_00500"/>
    </source>
</evidence>
<evidence type="ECO:0000305" key="2"/>
<proteinExistence type="inferred from homology"/>
<name>RS20_STRPM</name>
<organism>
    <name type="scientific">Streptococcus pyogenes serotype M28 (strain MGAS6180)</name>
    <dbReference type="NCBI Taxonomy" id="319701"/>
    <lineage>
        <taxon>Bacteria</taxon>
        <taxon>Bacillati</taxon>
        <taxon>Bacillota</taxon>
        <taxon>Bacilli</taxon>
        <taxon>Lactobacillales</taxon>
        <taxon>Streptococcaceae</taxon>
        <taxon>Streptococcus</taxon>
    </lineage>
</organism>
<dbReference type="EMBL" id="CP000056">
    <property type="protein sequence ID" value="AAX72031.1"/>
    <property type="molecule type" value="Genomic_DNA"/>
</dbReference>
<dbReference type="SMR" id="Q48TC9"/>
<dbReference type="KEGG" id="spb:M28_Spy0918"/>
<dbReference type="HOGENOM" id="CLU_160655_1_1_9"/>
<dbReference type="GO" id="GO:0005829">
    <property type="term" value="C:cytosol"/>
    <property type="evidence" value="ECO:0007669"/>
    <property type="project" value="TreeGrafter"/>
</dbReference>
<dbReference type="GO" id="GO:0015935">
    <property type="term" value="C:small ribosomal subunit"/>
    <property type="evidence" value="ECO:0007669"/>
    <property type="project" value="TreeGrafter"/>
</dbReference>
<dbReference type="GO" id="GO:0070181">
    <property type="term" value="F:small ribosomal subunit rRNA binding"/>
    <property type="evidence" value="ECO:0007669"/>
    <property type="project" value="TreeGrafter"/>
</dbReference>
<dbReference type="GO" id="GO:0003735">
    <property type="term" value="F:structural constituent of ribosome"/>
    <property type="evidence" value="ECO:0007669"/>
    <property type="project" value="InterPro"/>
</dbReference>
<dbReference type="GO" id="GO:0006412">
    <property type="term" value="P:translation"/>
    <property type="evidence" value="ECO:0007669"/>
    <property type="project" value="UniProtKB-UniRule"/>
</dbReference>
<dbReference type="FunFam" id="1.20.58.110:FF:000001">
    <property type="entry name" value="30S ribosomal protein S20"/>
    <property type="match status" value="1"/>
</dbReference>
<dbReference type="Gene3D" id="1.20.58.110">
    <property type="entry name" value="Ribosomal protein S20"/>
    <property type="match status" value="1"/>
</dbReference>
<dbReference type="HAMAP" id="MF_00500">
    <property type="entry name" value="Ribosomal_bS20"/>
    <property type="match status" value="1"/>
</dbReference>
<dbReference type="InterPro" id="IPR002583">
    <property type="entry name" value="Ribosomal_bS20"/>
</dbReference>
<dbReference type="InterPro" id="IPR036510">
    <property type="entry name" value="Ribosomal_bS20_sf"/>
</dbReference>
<dbReference type="NCBIfam" id="TIGR00029">
    <property type="entry name" value="S20"/>
    <property type="match status" value="1"/>
</dbReference>
<dbReference type="PANTHER" id="PTHR33398">
    <property type="entry name" value="30S RIBOSOMAL PROTEIN S20"/>
    <property type="match status" value="1"/>
</dbReference>
<dbReference type="PANTHER" id="PTHR33398:SF1">
    <property type="entry name" value="SMALL RIBOSOMAL SUBUNIT PROTEIN BS20C"/>
    <property type="match status" value="1"/>
</dbReference>
<dbReference type="Pfam" id="PF01649">
    <property type="entry name" value="Ribosomal_S20p"/>
    <property type="match status" value="1"/>
</dbReference>
<dbReference type="SUPFAM" id="SSF46992">
    <property type="entry name" value="Ribosomal protein S20"/>
    <property type="match status" value="1"/>
</dbReference>
<feature type="chain" id="PRO_0000236456" description="Small ribosomal subunit protein bS20">
    <location>
        <begin position="1"/>
        <end position="82"/>
    </location>
</feature>
<keyword id="KW-0687">Ribonucleoprotein</keyword>
<keyword id="KW-0689">Ribosomal protein</keyword>
<keyword id="KW-0694">RNA-binding</keyword>
<keyword id="KW-0699">rRNA-binding</keyword>
<sequence>MEVKTLANIKSAIKRAELNVKANEKNSAQKSAMRTAIKAFEANPSEELFRAASSSIDKAESKGLIHKNKASRDKARLAAKLG</sequence>
<reference key="1">
    <citation type="journal article" date="2005" name="J. Infect. Dis.">
        <title>Genome sequence of a serotype M28 strain of group A Streptococcus: potential new insights into puerperal sepsis and bacterial disease specificity.</title>
        <authorList>
            <person name="Green N.M."/>
            <person name="Zhang S."/>
            <person name="Porcella S.F."/>
            <person name="Nagiec M.J."/>
            <person name="Barbian K.D."/>
            <person name="Beres S.B."/>
            <person name="Lefebvre R.B."/>
            <person name="Musser J.M."/>
        </authorList>
    </citation>
    <scope>NUCLEOTIDE SEQUENCE [LARGE SCALE GENOMIC DNA]</scope>
    <source>
        <strain>MGAS6180</strain>
    </source>
</reference>
<gene>
    <name evidence="1" type="primary">rpsT</name>
    <name type="ordered locus">M28_Spy0918</name>
</gene>